<dbReference type="EC" id="2.7.1.2"/>
<dbReference type="EMBL" id="U33057">
    <property type="protein sequence ID" value="AAB64957.1"/>
    <property type="molecule type" value="Genomic_DNA"/>
</dbReference>
<dbReference type="EMBL" id="BK006938">
    <property type="protein sequence ID" value="DAA12347.1"/>
    <property type="molecule type" value="Genomic_DNA"/>
</dbReference>
<dbReference type="PIR" id="S69573">
    <property type="entry name" value="S69573"/>
</dbReference>
<dbReference type="RefSeq" id="NP_010804.3">
    <property type="nucleotide sequence ID" value="NM_001180824.3"/>
</dbReference>
<dbReference type="SMR" id="Q04409"/>
<dbReference type="BioGRID" id="32567">
    <property type="interactions" value="121"/>
</dbReference>
<dbReference type="DIP" id="DIP-4977N"/>
<dbReference type="FunCoup" id="Q04409">
    <property type="interactions" value="980"/>
</dbReference>
<dbReference type="IntAct" id="Q04409">
    <property type="interactions" value="10"/>
</dbReference>
<dbReference type="MINT" id="Q04409"/>
<dbReference type="STRING" id="4932.YDR516C"/>
<dbReference type="iPTMnet" id="Q04409"/>
<dbReference type="PaxDb" id="4932-YDR516C"/>
<dbReference type="PeptideAtlas" id="Q04409"/>
<dbReference type="EnsemblFungi" id="YDR516C_mRNA">
    <property type="protein sequence ID" value="YDR516C"/>
    <property type="gene ID" value="YDR516C"/>
</dbReference>
<dbReference type="GeneID" id="852128"/>
<dbReference type="KEGG" id="sce:YDR516C"/>
<dbReference type="AGR" id="SGD:S000002924"/>
<dbReference type="SGD" id="S000002924">
    <property type="gene designation" value="EMI2"/>
</dbReference>
<dbReference type="VEuPathDB" id="FungiDB:YDR516C"/>
<dbReference type="eggNOG" id="KOG1369">
    <property type="taxonomic scope" value="Eukaryota"/>
</dbReference>
<dbReference type="GeneTree" id="ENSGT00950000182787"/>
<dbReference type="HOGENOM" id="CLU_014393_5_0_1"/>
<dbReference type="InParanoid" id="Q04409"/>
<dbReference type="OMA" id="RELMQPF"/>
<dbReference type="OrthoDB" id="419537at2759"/>
<dbReference type="BioCyc" id="YEAST:G3O-30035-MONOMER"/>
<dbReference type="Reactome" id="R-SCE-170822">
    <property type="pathway name" value="Regulation of Glucokinase by Glucokinase Regulatory Protein"/>
</dbReference>
<dbReference type="Reactome" id="R-SCE-446205">
    <property type="pathway name" value="Synthesis of GDP-mannose"/>
</dbReference>
<dbReference type="Reactome" id="R-SCE-6798695">
    <property type="pathway name" value="Neutrophil degranulation"/>
</dbReference>
<dbReference type="Reactome" id="R-SCE-70171">
    <property type="pathway name" value="Glycolysis"/>
</dbReference>
<dbReference type="UniPathway" id="UPA00109">
    <property type="reaction ID" value="UER00180"/>
</dbReference>
<dbReference type="BioGRID-ORCS" id="852128">
    <property type="hits" value="2 hits in 10 CRISPR screens"/>
</dbReference>
<dbReference type="PRO" id="PR:Q04409"/>
<dbReference type="Proteomes" id="UP000002311">
    <property type="component" value="Chromosome IV"/>
</dbReference>
<dbReference type="RNAct" id="Q04409">
    <property type="molecule type" value="protein"/>
</dbReference>
<dbReference type="GO" id="GO:0005737">
    <property type="term" value="C:cytoplasm"/>
    <property type="evidence" value="ECO:0007005"/>
    <property type="project" value="SGD"/>
</dbReference>
<dbReference type="GO" id="GO:0005829">
    <property type="term" value="C:cytosol"/>
    <property type="evidence" value="ECO:0000318"/>
    <property type="project" value="GO_Central"/>
</dbReference>
<dbReference type="GO" id="GO:0005739">
    <property type="term" value="C:mitochondrion"/>
    <property type="evidence" value="ECO:0000318"/>
    <property type="project" value="GO_Central"/>
</dbReference>
<dbReference type="GO" id="GO:0005524">
    <property type="term" value="F:ATP binding"/>
    <property type="evidence" value="ECO:0007669"/>
    <property type="project" value="UniProtKB-KW"/>
</dbReference>
<dbReference type="GO" id="GO:0005536">
    <property type="term" value="F:D-glucose binding"/>
    <property type="evidence" value="ECO:0007669"/>
    <property type="project" value="InterPro"/>
</dbReference>
<dbReference type="GO" id="GO:0008865">
    <property type="term" value="F:fructokinase activity"/>
    <property type="evidence" value="ECO:0000318"/>
    <property type="project" value="GO_Central"/>
</dbReference>
<dbReference type="GO" id="GO:0004340">
    <property type="term" value="F:glucokinase activity"/>
    <property type="evidence" value="ECO:0000318"/>
    <property type="project" value="GO_Central"/>
</dbReference>
<dbReference type="GO" id="GO:0004396">
    <property type="term" value="F:hexokinase activity"/>
    <property type="evidence" value="ECO:0000314"/>
    <property type="project" value="SGD"/>
</dbReference>
<dbReference type="GO" id="GO:0030437">
    <property type="term" value="P:ascospore formation"/>
    <property type="evidence" value="ECO:0007001"/>
    <property type="project" value="SGD"/>
</dbReference>
<dbReference type="GO" id="GO:0051156">
    <property type="term" value="P:glucose 6-phosphate metabolic process"/>
    <property type="evidence" value="ECO:0000318"/>
    <property type="project" value="GO_Central"/>
</dbReference>
<dbReference type="GO" id="GO:0006006">
    <property type="term" value="P:glucose metabolic process"/>
    <property type="evidence" value="ECO:0000318"/>
    <property type="project" value="GO_Central"/>
</dbReference>
<dbReference type="GO" id="GO:0006096">
    <property type="term" value="P:glycolytic process"/>
    <property type="evidence" value="ECO:0000318"/>
    <property type="project" value="GO_Central"/>
</dbReference>
<dbReference type="GO" id="GO:0019318">
    <property type="term" value="P:hexose metabolic process"/>
    <property type="evidence" value="ECO:0000314"/>
    <property type="project" value="SGD"/>
</dbReference>
<dbReference type="GO" id="GO:0001678">
    <property type="term" value="P:intracellular glucose homeostasis"/>
    <property type="evidence" value="ECO:0000318"/>
    <property type="project" value="GO_Central"/>
</dbReference>
<dbReference type="CDD" id="cd24088">
    <property type="entry name" value="ASKHA_NBD_GLK1-2_fungi"/>
    <property type="match status" value="1"/>
</dbReference>
<dbReference type="FunFam" id="3.30.420.40:FF:000034">
    <property type="entry name" value="Phosphotransferase"/>
    <property type="match status" value="1"/>
</dbReference>
<dbReference type="FunFam" id="3.40.367.20:FF:000006">
    <property type="entry name" value="Phosphotransferase"/>
    <property type="match status" value="1"/>
</dbReference>
<dbReference type="Gene3D" id="3.30.420.40">
    <property type="match status" value="1"/>
</dbReference>
<dbReference type="Gene3D" id="3.40.367.20">
    <property type="match status" value="1"/>
</dbReference>
<dbReference type="InterPro" id="IPR043129">
    <property type="entry name" value="ATPase_NBD"/>
</dbReference>
<dbReference type="InterPro" id="IPR001312">
    <property type="entry name" value="Hexokinase"/>
</dbReference>
<dbReference type="InterPro" id="IPR019807">
    <property type="entry name" value="Hexokinase_BS"/>
</dbReference>
<dbReference type="InterPro" id="IPR022673">
    <property type="entry name" value="Hexokinase_C"/>
</dbReference>
<dbReference type="InterPro" id="IPR022672">
    <property type="entry name" value="Hexokinase_N"/>
</dbReference>
<dbReference type="PANTHER" id="PTHR19443:SF30">
    <property type="entry name" value="GLUCOKINASE-1-RELATED"/>
    <property type="match status" value="1"/>
</dbReference>
<dbReference type="PANTHER" id="PTHR19443">
    <property type="entry name" value="HEXOKINASE"/>
    <property type="match status" value="1"/>
</dbReference>
<dbReference type="Pfam" id="PF00349">
    <property type="entry name" value="Hexokinase_1"/>
    <property type="match status" value="1"/>
</dbReference>
<dbReference type="Pfam" id="PF03727">
    <property type="entry name" value="Hexokinase_2"/>
    <property type="match status" value="1"/>
</dbReference>
<dbReference type="PRINTS" id="PR00475">
    <property type="entry name" value="HEXOKINASE"/>
</dbReference>
<dbReference type="SUPFAM" id="SSF53067">
    <property type="entry name" value="Actin-like ATPase domain"/>
    <property type="match status" value="2"/>
</dbReference>
<dbReference type="PROSITE" id="PS00378">
    <property type="entry name" value="HEXOKINASE_1"/>
    <property type="match status" value="1"/>
</dbReference>
<dbReference type="PROSITE" id="PS51748">
    <property type="entry name" value="HEXOKINASE_2"/>
    <property type="match status" value="1"/>
</dbReference>
<name>EMI2_YEAST</name>
<evidence type="ECO:0000250" key="1"/>
<evidence type="ECO:0000250" key="2">
    <source>
        <dbReference type="UniProtKB" id="P17709"/>
    </source>
</evidence>
<evidence type="ECO:0000255" key="3">
    <source>
        <dbReference type="PROSITE-ProRule" id="PRU01084"/>
    </source>
</evidence>
<evidence type="ECO:0000269" key="4">
    <source>
    </source>
</evidence>
<evidence type="ECO:0000269" key="5">
    <source>
    </source>
</evidence>
<evidence type="ECO:0000269" key="6">
    <source>
    </source>
</evidence>
<evidence type="ECO:0000269" key="7">
    <source>
    </source>
</evidence>
<evidence type="ECO:0000305" key="8"/>
<accession>Q04409</accession>
<accession>D6VTD7</accession>
<protein>
    <recommendedName>
        <fullName>Putative glucokinase-2</fullName>
        <ecNumber>2.7.1.2</ecNumber>
    </recommendedName>
    <alternativeName>
        <fullName>Early meiotic induction protein 2</fullName>
    </alternativeName>
    <alternativeName>
        <fullName>Glucose kinase 2</fullName>
        <shortName>GLK-2</shortName>
    </alternativeName>
</protein>
<sequence length="500" mass="55921">MSFENLHKVNAEALEDAVVEICSSLQVDAAKLDELTAYFIECMEKGLNNTSVGEEKTVDKGLPMIPTYVTSLPNGTERGVLLAADLGGTHFRVCSVTLNGDGTFDMQQLKSKIPEEYLNDKDVTSEELFSYLGRRTRAFVRKHHPELLKSTGENIKPLKMGFTFSYPVDQTSLSSGTLIRWTKSFKIEDTVGKDVVRLYQEQLDIQGLSMINVVALTNDTVGTFLSHCYTSGSRPSSAGEISEPVIGCIFGTGTNGCYMEDIENIKKLPDELRTRLLHEGKTQMCINIEWGSFDNELKHLSATKYDIDIDQKFSPNPGYHLFEKRISGMYLGELLRNILVDLHARGLILGQYRNYDQLPHRLKTPFQLCSEVLSRIEIDDSTNLRETELSFLQSLRLPTTFEERKAIQNLVRSITRRSAYLAAVPIAAILIKTNALNKRYHGEVEIGFDGYVIEYYPGFRSMLRHALALSPIGTEGERKIHLRLAKDGSGVGAALCALVA</sequence>
<feature type="initiator methionine" description="Removed" evidence="2">
    <location>
        <position position="1"/>
    </location>
</feature>
<feature type="chain" id="PRO_0000197604" description="Putative glucokinase-2">
    <location>
        <begin position="2"/>
        <end position="500"/>
    </location>
</feature>
<feature type="domain" description="Hexokinase" evidence="3">
    <location>
        <begin position="12"/>
        <end position="498"/>
    </location>
</feature>
<feature type="region of interest" description="Hexokinase small subdomain" evidence="3">
    <location>
        <begin position="74"/>
        <end position="217"/>
    </location>
</feature>
<feature type="region of interest" description="Glucose-binding" evidence="1">
    <location>
        <begin position="159"/>
        <end position="185"/>
    </location>
</feature>
<feature type="region of interest" description="Hexokinase large subdomain" evidence="3">
    <location>
        <begin position="218"/>
        <end position="487"/>
    </location>
</feature>
<feature type="binding site" evidence="1">
    <location>
        <position position="110"/>
    </location>
    <ligand>
        <name>ATP</name>
        <dbReference type="ChEBI" id="CHEBI:30616"/>
    </ligand>
</feature>
<feature type="binding site" evidence="1">
    <location>
        <begin position="487"/>
        <end position="492"/>
    </location>
    <ligand>
        <name>ATP</name>
        <dbReference type="ChEBI" id="CHEBI:30616"/>
    </ligand>
</feature>
<feature type="modified residue" description="N-acetylserine" evidence="2">
    <location>
        <position position="2"/>
    </location>
</feature>
<feature type="modified residue" description="Phosphoserine" evidence="2">
    <location>
        <position position="2"/>
    </location>
</feature>
<feature type="modified residue" description="Phosphoserine" evidence="2">
    <location>
        <position position="470"/>
    </location>
</feature>
<comment type="function">
    <text evidence="1 4">Putative glucokinase involved in phosphorylation of aldohexoses and glucose uptake (By similarity). Involved in sporulation. Required for the full activation of the early meiotic inducer IME1.</text>
</comment>
<comment type="catalytic activity">
    <reaction>
        <text>D-glucose + ATP = D-glucose 6-phosphate + ADP + H(+)</text>
        <dbReference type="Rhea" id="RHEA:17825"/>
        <dbReference type="ChEBI" id="CHEBI:4167"/>
        <dbReference type="ChEBI" id="CHEBI:15378"/>
        <dbReference type="ChEBI" id="CHEBI:30616"/>
        <dbReference type="ChEBI" id="CHEBI:61548"/>
        <dbReference type="ChEBI" id="CHEBI:456216"/>
        <dbReference type="EC" id="2.7.1.2"/>
    </reaction>
</comment>
<comment type="pathway">
    <text>Carbohydrate degradation; glycolysis; D-glyceraldehyde 3-phosphate and glycerone phosphate from D-glucose: step 1/4.</text>
</comment>
<comment type="interaction">
    <interactant intactId="EBI-38225">
        <id>Q04409</id>
    </interactant>
    <interactant intactId="EBI-8744">
        <id>P17709</id>
        <label>GLK1</label>
    </interactant>
    <organismsDiffer>false</organismsDiffer>
    <experiments>3</experiments>
</comment>
<comment type="subcellular location">
    <subcellularLocation>
        <location evidence="5">Cytoplasm</location>
    </subcellularLocation>
</comment>
<comment type="induction">
    <text evidence="7">Repressed by glucose through the MIG1 and MIG2 repressors.</text>
</comment>
<comment type="miscellaneous">
    <text evidence="6">Present with 10600 molecules/cell in log phase SD medium.</text>
</comment>
<comment type="similarity">
    <text evidence="3 8">Belongs to the hexokinase family.</text>
</comment>
<keyword id="KW-0007">Acetylation</keyword>
<keyword id="KW-0067">ATP-binding</keyword>
<keyword id="KW-0963">Cytoplasm</keyword>
<keyword id="KW-0324">Glycolysis</keyword>
<keyword id="KW-0418">Kinase</keyword>
<keyword id="KW-0547">Nucleotide-binding</keyword>
<keyword id="KW-0597">Phosphoprotein</keyword>
<keyword id="KW-1185">Reference proteome</keyword>
<keyword id="KW-0749">Sporulation</keyword>
<keyword id="KW-0808">Transferase</keyword>
<proteinExistence type="evidence at protein level"/>
<gene>
    <name type="primary">EMI2</name>
    <name type="ordered locus">YDR516C</name>
    <name type="ORF">D9719.21</name>
</gene>
<organism>
    <name type="scientific">Saccharomyces cerevisiae (strain ATCC 204508 / S288c)</name>
    <name type="common">Baker's yeast</name>
    <dbReference type="NCBI Taxonomy" id="559292"/>
    <lineage>
        <taxon>Eukaryota</taxon>
        <taxon>Fungi</taxon>
        <taxon>Dikarya</taxon>
        <taxon>Ascomycota</taxon>
        <taxon>Saccharomycotina</taxon>
        <taxon>Saccharomycetes</taxon>
        <taxon>Saccharomycetales</taxon>
        <taxon>Saccharomycetaceae</taxon>
        <taxon>Saccharomyces</taxon>
    </lineage>
</organism>
<reference key="1">
    <citation type="journal article" date="1997" name="Nature">
        <title>The nucleotide sequence of Saccharomyces cerevisiae chromosome IV.</title>
        <authorList>
            <person name="Jacq C."/>
            <person name="Alt-Moerbe J."/>
            <person name="Andre B."/>
            <person name="Arnold W."/>
            <person name="Bahr A."/>
            <person name="Ballesta J.P.G."/>
            <person name="Bargues M."/>
            <person name="Baron L."/>
            <person name="Becker A."/>
            <person name="Biteau N."/>
            <person name="Bloecker H."/>
            <person name="Blugeon C."/>
            <person name="Boskovic J."/>
            <person name="Brandt P."/>
            <person name="Brueckner M."/>
            <person name="Buitrago M.J."/>
            <person name="Coster F."/>
            <person name="Delaveau T."/>
            <person name="del Rey F."/>
            <person name="Dujon B."/>
            <person name="Eide L.G."/>
            <person name="Garcia-Cantalejo J.M."/>
            <person name="Goffeau A."/>
            <person name="Gomez-Peris A."/>
            <person name="Granotier C."/>
            <person name="Hanemann V."/>
            <person name="Hankeln T."/>
            <person name="Hoheisel J.D."/>
            <person name="Jaeger W."/>
            <person name="Jimenez A."/>
            <person name="Jonniaux J.-L."/>
            <person name="Kraemer C."/>
            <person name="Kuester H."/>
            <person name="Laamanen P."/>
            <person name="Legros Y."/>
            <person name="Louis E.J."/>
            <person name="Moeller-Rieker S."/>
            <person name="Monnet A."/>
            <person name="Moro M."/>
            <person name="Mueller-Auer S."/>
            <person name="Nussbaumer B."/>
            <person name="Paricio N."/>
            <person name="Paulin L."/>
            <person name="Perea J."/>
            <person name="Perez-Alonso M."/>
            <person name="Perez-Ortin J.E."/>
            <person name="Pohl T.M."/>
            <person name="Prydz H."/>
            <person name="Purnelle B."/>
            <person name="Rasmussen S.W."/>
            <person name="Remacha M.A."/>
            <person name="Revuelta J.L."/>
            <person name="Rieger M."/>
            <person name="Salom D."/>
            <person name="Saluz H.P."/>
            <person name="Saiz J.E."/>
            <person name="Saren A.-M."/>
            <person name="Schaefer M."/>
            <person name="Scharfe M."/>
            <person name="Schmidt E.R."/>
            <person name="Schneider C."/>
            <person name="Scholler P."/>
            <person name="Schwarz S."/>
            <person name="Soler-Mira A."/>
            <person name="Urrestarazu L.A."/>
            <person name="Verhasselt P."/>
            <person name="Vissers S."/>
            <person name="Voet M."/>
            <person name="Volckaert G."/>
            <person name="Wagner G."/>
            <person name="Wambutt R."/>
            <person name="Wedler E."/>
            <person name="Wedler H."/>
            <person name="Woelfl S."/>
            <person name="Harris D.E."/>
            <person name="Bowman S."/>
            <person name="Brown D."/>
            <person name="Churcher C.M."/>
            <person name="Connor R."/>
            <person name="Dedman K."/>
            <person name="Gentles S."/>
            <person name="Hamlin N."/>
            <person name="Hunt S."/>
            <person name="Jones L."/>
            <person name="McDonald S."/>
            <person name="Murphy L.D."/>
            <person name="Niblett D."/>
            <person name="Odell C."/>
            <person name="Oliver K."/>
            <person name="Rajandream M.A."/>
            <person name="Richards C."/>
            <person name="Shore L."/>
            <person name="Walsh S.V."/>
            <person name="Barrell B.G."/>
            <person name="Dietrich F.S."/>
            <person name="Mulligan J.T."/>
            <person name="Allen E."/>
            <person name="Araujo R."/>
            <person name="Aviles E."/>
            <person name="Berno A."/>
            <person name="Carpenter J."/>
            <person name="Chen E."/>
            <person name="Cherry J.M."/>
            <person name="Chung E."/>
            <person name="Duncan M."/>
            <person name="Hunicke-Smith S."/>
            <person name="Hyman R.W."/>
            <person name="Komp C."/>
            <person name="Lashkari D."/>
            <person name="Lew H."/>
            <person name="Lin D."/>
            <person name="Mosedale D."/>
            <person name="Nakahara K."/>
            <person name="Namath A."/>
            <person name="Oefner P."/>
            <person name="Oh C."/>
            <person name="Petel F.X."/>
            <person name="Roberts D."/>
            <person name="Schramm S."/>
            <person name="Schroeder M."/>
            <person name="Shogren T."/>
            <person name="Shroff N."/>
            <person name="Winant A."/>
            <person name="Yelton M.A."/>
            <person name="Botstein D."/>
            <person name="Davis R.W."/>
            <person name="Johnston M."/>
            <person name="Andrews S."/>
            <person name="Brinkman R."/>
            <person name="Cooper J."/>
            <person name="Ding H."/>
            <person name="Du Z."/>
            <person name="Favello A."/>
            <person name="Fulton L."/>
            <person name="Gattung S."/>
            <person name="Greco T."/>
            <person name="Hallsworth K."/>
            <person name="Hawkins J."/>
            <person name="Hillier L.W."/>
            <person name="Jier M."/>
            <person name="Johnson D."/>
            <person name="Johnston L."/>
            <person name="Kirsten J."/>
            <person name="Kucaba T."/>
            <person name="Langston Y."/>
            <person name="Latreille P."/>
            <person name="Le T."/>
            <person name="Mardis E."/>
            <person name="Menezes S."/>
            <person name="Miller N."/>
            <person name="Nhan M."/>
            <person name="Pauley A."/>
            <person name="Peluso D."/>
            <person name="Rifkin L."/>
            <person name="Riles L."/>
            <person name="Taich A."/>
            <person name="Trevaskis E."/>
            <person name="Vignati D."/>
            <person name="Wilcox L."/>
            <person name="Wohldman P."/>
            <person name="Vaudin M."/>
            <person name="Wilson R."/>
            <person name="Waterston R."/>
            <person name="Albermann K."/>
            <person name="Hani J."/>
            <person name="Heumann K."/>
            <person name="Kleine K."/>
            <person name="Mewes H.-W."/>
            <person name="Zollner A."/>
            <person name="Zaccaria P."/>
        </authorList>
    </citation>
    <scope>NUCLEOTIDE SEQUENCE [LARGE SCALE GENOMIC DNA]</scope>
    <source>
        <strain>ATCC 204508 / S288c</strain>
    </source>
</reference>
<reference key="2">
    <citation type="journal article" date="2014" name="G3 (Bethesda)">
        <title>The reference genome sequence of Saccharomyces cerevisiae: Then and now.</title>
        <authorList>
            <person name="Engel S.R."/>
            <person name="Dietrich F.S."/>
            <person name="Fisk D.G."/>
            <person name="Binkley G."/>
            <person name="Balakrishnan R."/>
            <person name="Costanzo M.C."/>
            <person name="Dwight S.S."/>
            <person name="Hitz B.C."/>
            <person name="Karra K."/>
            <person name="Nash R.S."/>
            <person name="Weng S."/>
            <person name="Wong E.D."/>
            <person name="Lloyd P."/>
            <person name="Skrzypek M.S."/>
            <person name="Miyasato S.R."/>
            <person name="Simison M."/>
            <person name="Cherry J.M."/>
        </authorList>
    </citation>
    <scope>GENOME REANNOTATION</scope>
    <source>
        <strain>ATCC 204508 / S288c</strain>
    </source>
</reference>
<reference key="3">
    <citation type="journal article" date="1998" name="Genetics">
        <title>Characterization of three related glucose repressors and genes they regulate in Saccharomyces cerevisiae.</title>
        <authorList>
            <person name="Lutfiyya L.L."/>
            <person name="Iyer V.R."/>
            <person name="DeRisi J."/>
            <person name="DeVit M.J."/>
            <person name="Brown P.O."/>
            <person name="Johnston M."/>
        </authorList>
    </citation>
    <scope>INDUCTION</scope>
</reference>
<reference key="4">
    <citation type="journal article" date="2003" name="Genetics">
        <title>Large-scale functional genomic analysis of sporulation and meiosis in Saccharomyces cerevisiae.</title>
        <authorList>
            <person name="Enyenihi A.H."/>
            <person name="Saunders W.S."/>
        </authorList>
    </citation>
    <scope>FUNCTION</scope>
</reference>
<reference key="5">
    <citation type="journal article" date="2003" name="Nature">
        <title>Global analysis of protein localization in budding yeast.</title>
        <authorList>
            <person name="Huh W.-K."/>
            <person name="Falvo J.V."/>
            <person name="Gerke L.C."/>
            <person name="Carroll A.S."/>
            <person name="Howson R.W."/>
            <person name="Weissman J.S."/>
            <person name="O'Shea E.K."/>
        </authorList>
    </citation>
    <scope>SUBCELLULAR LOCATION [LARGE SCALE ANALYSIS]</scope>
</reference>
<reference key="6">
    <citation type="journal article" date="2003" name="Nature">
        <title>Global analysis of protein expression in yeast.</title>
        <authorList>
            <person name="Ghaemmaghami S."/>
            <person name="Huh W.-K."/>
            <person name="Bower K."/>
            <person name="Howson R.W."/>
            <person name="Belle A."/>
            <person name="Dephoure N."/>
            <person name="O'Shea E.K."/>
            <person name="Weissman J.S."/>
        </authorList>
    </citation>
    <scope>LEVEL OF PROTEIN EXPRESSION [LARGE SCALE ANALYSIS]</scope>
</reference>